<sequence length="911" mass="100289">MVLVGQGMEPEEAFTKVQVVYYLSRGGQLQQPHLIDVPVSTHSNGLYLRDVKRRLTSIRGKGMGDSFSWSCKRNYKNNFIWQDLADDDKILPLSDGELVLKGSELYTGFQEKAEFMDGQFDPENASQLPNKIKKLASKKFDFEAVKRSLDMESDKLQEQSDLAAALSLSLQLMSDPHMKRFSKDKSMDLNQQVMNSLSQAKSNAAEECMLDHSVTDISSETLHSEESTVQKFSFNETIRERSKSTASASSSGTDREHSYGPPRKTESMGRERSLPRDLPRSREVSRELPPQVPREAPREKSREMSRELPREAPRELQLPREAPRELPREVPRETSRELPREAPREISRELPREGPREVAREQPREVVVPREVVREVSRELPRDVSRDSSKAVKDTAKTRQEKPEELPTIKTKKSPTCSESGDSTPFMLSPRRLMAALSSPSPEKKFGKLVHSSSTRSSTPSTSAASTQCEDSLPNINIRLAKQATCLSNFRLCGNANPHATDSRPDSPEHPLAAAAQPASGAVPQSPNTRGHQGGPYWPRWRSGRKPRTSSEGKEGPEPPTPPRGPMTKPVTVAKPDPPLKKSFEFDMNVSGVNSAMATPFLQTENNSPSSSESSSAAVSSGKKPASISLSGTSDASDGGNGASSTASSSSEVQNNVSVKEVITQQLPSPSSSEGRPSLNIDTASLPRVSISEAISDVRETVKTTRPDSPESPMKPNPPSSPVRTQLSSSPSFNKRIEDARARARSLVSKEIRSGESRSSKDLLKENDRVKTSSGSMRSGSTRTPNNKNGTTGAGSKTLSGTFNRSPPRINSIMWEDAPLTPTKKEFVNRDDRPLTAGRTNLDWEKTLQEAASLSLPPPDFGQILQECGQCGRTFKPDSLKVHMRGCHALRRSKDFQPFNGTSVAIRTRLQ</sequence>
<comment type="function">
    <text evidence="1">SOSEKI proteins locally interpret global polarity cues and can influence cell division orientation to coordinate cell polarization relative to body axes.</text>
</comment>
<comment type="cofactor">
    <cofactor evidence="2">
        <name>Zn(2+)</name>
        <dbReference type="ChEBI" id="CHEBI:29105"/>
    </cofactor>
</comment>
<comment type="subunit">
    <text evidence="1 4">Homodimer (By similarity). Forms long polymer filaments with other SOKs proteins polymers crucial for polar localization and biological activity (PubMed:32004461).</text>
</comment>
<comment type="subcellular location">
    <subcellularLocation>
        <location evidence="4">Cell membrane</location>
        <topology evidence="4">Peripheral membrane protein</topology>
        <orientation evidence="4">Cytoplasmic side</orientation>
    </subcellularLocation>
    <text evidence="4">Localize to polar cell edges in roots.</text>
</comment>
<comment type="domain">
    <text evidence="1">The DIX-like oligomerization domain is required for polymerization, edge localization and biological activity.</text>
</comment>
<comment type="miscellaneous">
    <text evidence="6">'Soseki' means cornerstone in Japanese.</text>
</comment>
<comment type="similarity">
    <text evidence="6">Belongs to the SOSEKI family.</text>
</comment>
<keyword id="KW-0131">Cell cycle</keyword>
<keyword id="KW-0132">Cell division</keyword>
<keyword id="KW-1003">Cell membrane</keyword>
<keyword id="KW-0217">Developmental protein</keyword>
<keyword id="KW-0472">Membrane</keyword>
<keyword id="KW-0479">Metal-binding</keyword>
<keyword id="KW-1185">Reference proteome</keyword>
<keyword id="KW-0862">Zinc</keyword>
<keyword id="KW-0863">Zinc-finger</keyword>
<organism>
    <name type="scientific">Marchantia polymorpha</name>
    <name type="common">Common liverwort</name>
    <name type="synonym">Marchantia aquatica</name>
    <dbReference type="NCBI Taxonomy" id="3197"/>
    <lineage>
        <taxon>Eukaryota</taxon>
        <taxon>Viridiplantae</taxon>
        <taxon>Streptophyta</taxon>
        <taxon>Embryophyta</taxon>
        <taxon>Marchantiophyta</taxon>
        <taxon>Marchantiopsida</taxon>
        <taxon>Marchantiidae</taxon>
        <taxon>Marchantiales</taxon>
        <taxon>Marchantiaceae</taxon>
        <taxon>Marchantia</taxon>
    </lineage>
</organism>
<reference key="1">
    <citation type="journal article" date="2017" name="Cell">
        <title>Insights into land plant evolution garnered from the Marchantia polymorpha genome.</title>
        <authorList>
            <person name="Bowman J.L."/>
            <person name="Kohchi T."/>
            <person name="Yamato K.T."/>
            <person name="Jenkins J."/>
            <person name="Shu S."/>
            <person name="Ishizaki K."/>
            <person name="Yamaoka S."/>
            <person name="Nishihama R."/>
            <person name="Nakamura Y."/>
            <person name="Berger F."/>
            <person name="Adam C."/>
            <person name="Aki S.S."/>
            <person name="Althoff F."/>
            <person name="Araki T."/>
            <person name="Arteaga-Vazquez M.A."/>
            <person name="Balasubrmanian S."/>
            <person name="Barry K."/>
            <person name="Bauer D."/>
            <person name="Boehm C.R."/>
            <person name="Briginshaw L."/>
            <person name="Caballero-Perez J."/>
            <person name="Catarino B."/>
            <person name="Chen F."/>
            <person name="Chiyoda S."/>
            <person name="Chovatia M."/>
            <person name="Davies K.M."/>
            <person name="Delmans M."/>
            <person name="Demura T."/>
            <person name="Dierschke T."/>
            <person name="Dolan L."/>
            <person name="Dorantes-Acosta A.E."/>
            <person name="Eklund D.M."/>
            <person name="Florent S.N."/>
            <person name="Flores-Sandoval E."/>
            <person name="Fujiyama A."/>
            <person name="Fukuzawa H."/>
            <person name="Galik B."/>
            <person name="Grimanelli D."/>
            <person name="Grimwood J."/>
            <person name="Grossniklaus U."/>
            <person name="Hamada T."/>
            <person name="Haseloff J."/>
            <person name="Hetherington A.J."/>
            <person name="Higo A."/>
            <person name="Hirakawa Y."/>
            <person name="Hundley H.N."/>
            <person name="Ikeda Y."/>
            <person name="Inoue K."/>
            <person name="Inoue S.I."/>
            <person name="Ishida S."/>
            <person name="Jia Q."/>
            <person name="Kakita M."/>
            <person name="Kanazawa T."/>
            <person name="Kawai Y."/>
            <person name="Kawashima T."/>
            <person name="Kennedy M."/>
            <person name="Kinose K."/>
            <person name="Kinoshita T."/>
            <person name="Kohara Y."/>
            <person name="Koide E."/>
            <person name="Komatsu K."/>
            <person name="Kopischke S."/>
            <person name="Kubo M."/>
            <person name="Kyozuka J."/>
            <person name="Lagercrantz U."/>
            <person name="Lin S.S."/>
            <person name="Lindquist E."/>
            <person name="Lipzen A.M."/>
            <person name="Lu C.W."/>
            <person name="De Luna E."/>
            <person name="Martienssen R.A."/>
            <person name="Minamino N."/>
            <person name="Mizutani M."/>
            <person name="Mizutani M."/>
            <person name="Mochizuki N."/>
            <person name="Monte I."/>
            <person name="Mosher R."/>
            <person name="Nagasaki H."/>
            <person name="Nakagami H."/>
            <person name="Naramoto S."/>
            <person name="Nishitani K."/>
            <person name="Ohtani M."/>
            <person name="Okamoto T."/>
            <person name="Okumura M."/>
            <person name="Phillips J."/>
            <person name="Pollak B."/>
            <person name="Reinders A."/>
            <person name="Rovekamp M."/>
            <person name="Sano R."/>
            <person name="Sawa S."/>
            <person name="Schmid M.W."/>
            <person name="Shirakawa M."/>
            <person name="Solano R."/>
            <person name="Spunde A."/>
            <person name="Suetsugu N."/>
            <person name="Sugano S."/>
            <person name="Sugiyama A."/>
            <person name="Sun R."/>
            <person name="Suzuki Y."/>
            <person name="Takenaka M."/>
            <person name="Takezawa D."/>
            <person name="Tomogane H."/>
            <person name="Tsuzuki M."/>
            <person name="Ueda T."/>
            <person name="Umeda M."/>
            <person name="Ward J.M."/>
            <person name="Watanabe Y."/>
            <person name="Yazaki K."/>
            <person name="Yokoyama R."/>
            <person name="Yoshitake Y."/>
            <person name="Yotsui I."/>
            <person name="Zachgo S."/>
            <person name="Schmutz J."/>
        </authorList>
    </citation>
    <scope>NUCLEOTIDE SEQUENCE [LARGE SCALE GENOMIC DNA]</scope>
    <source>
        <strain>Tak-1</strain>
    </source>
</reference>
<reference key="2">
    <citation type="journal article" date="2020" name="Cell">
        <title>DIX domain polymerization drives assembly of plant cell polarity complexes.</title>
        <authorList>
            <person name="van Dop M."/>
            <person name="Fiedler M."/>
            <person name="Mutte S."/>
            <person name="de Keijzer J."/>
            <person name="Olijslager L."/>
            <person name="Albrecht C."/>
            <person name="Liao C.Y."/>
            <person name="Janson M.E."/>
            <person name="Bienz M."/>
            <person name="Weijers D."/>
        </authorList>
    </citation>
    <scope>SUBCELLULAR LOCATION</scope>
    <scope>SUBUNIT</scope>
    <scope>GENE FAMILY</scope>
</reference>
<feature type="chain" id="PRO_0000452149" description="Protein SOSEKI">
    <location>
        <begin position="1"/>
        <end position="911"/>
    </location>
</feature>
<feature type="zinc finger region" description="C2HC/C3H-type" evidence="2">
    <location>
        <begin position="864"/>
        <end position="893"/>
    </location>
</feature>
<feature type="region of interest" description="DIX-like oligomerization domain" evidence="1">
    <location>
        <begin position="15"/>
        <end position="107"/>
    </location>
</feature>
<feature type="region of interest" description="Disordered" evidence="3">
    <location>
        <begin position="219"/>
        <end position="470"/>
    </location>
</feature>
<feature type="region of interest" description="Disordered" evidence="3">
    <location>
        <begin position="492"/>
        <end position="810"/>
    </location>
</feature>
<feature type="short sequence motif" description="Association to cell membranes" evidence="1">
    <location>
        <begin position="493"/>
        <end position="494"/>
    </location>
</feature>
<feature type="compositionally biased region" description="Basic and acidic residues" evidence="3">
    <location>
        <begin position="253"/>
        <end position="286"/>
    </location>
</feature>
<feature type="compositionally biased region" description="Basic and acidic residues" evidence="3">
    <location>
        <begin position="295"/>
        <end position="407"/>
    </location>
</feature>
<feature type="compositionally biased region" description="Polar residues" evidence="3">
    <location>
        <begin position="414"/>
        <end position="423"/>
    </location>
</feature>
<feature type="compositionally biased region" description="Low complexity" evidence="3">
    <location>
        <begin position="452"/>
        <end position="467"/>
    </location>
</feature>
<feature type="compositionally biased region" description="Low complexity" evidence="3">
    <location>
        <begin position="511"/>
        <end position="527"/>
    </location>
</feature>
<feature type="compositionally biased region" description="Polar residues" evidence="3">
    <location>
        <begin position="591"/>
        <end position="607"/>
    </location>
</feature>
<feature type="compositionally biased region" description="Low complexity" evidence="3">
    <location>
        <begin position="608"/>
        <end position="662"/>
    </location>
</feature>
<feature type="compositionally biased region" description="Polar residues" evidence="3">
    <location>
        <begin position="663"/>
        <end position="683"/>
    </location>
</feature>
<feature type="compositionally biased region" description="Basic and acidic residues" evidence="3">
    <location>
        <begin position="696"/>
        <end position="709"/>
    </location>
</feature>
<feature type="compositionally biased region" description="Polar residues" evidence="3">
    <location>
        <begin position="722"/>
        <end position="733"/>
    </location>
</feature>
<feature type="compositionally biased region" description="Basic and acidic residues" evidence="3">
    <location>
        <begin position="735"/>
        <end position="771"/>
    </location>
</feature>
<feature type="compositionally biased region" description="Low complexity" evidence="3">
    <location>
        <begin position="772"/>
        <end position="784"/>
    </location>
</feature>
<feature type="compositionally biased region" description="Polar residues" evidence="3">
    <location>
        <begin position="785"/>
        <end position="805"/>
    </location>
</feature>
<feature type="binding site" evidence="2">
    <location>
        <position position="868"/>
    </location>
    <ligand>
        <name>Zn(2+)</name>
        <dbReference type="ChEBI" id="CHEBI:29105"/>
    </ligand>
</feature>
<feature type="binding site" evidence="2">
    <location>
        <position position="871"/>
    </location>
    <ligand>
        <name>Zn(2+)</name>
        <dbReference type="ChEBI" id="CHEBI:29105"/>
    </ligand>
</feature>
<feature type="binding site" evidence="2">
    <location>
        <position position="883"/>
    </location>
    <ligand>
        <name>Zn(2+)</name>
        <dbReference type="ChEBI" id="CHEBI:29105"/>
    </ligand>
</feature>
<feature type="binding site" evidence="2">
    <location>
        <position position="887"/>
    </location>
    <ligand>
        <name>Zn(2+)</name>
        <dbReference type="ChEBI" id="CHEBI:29105"/>
    </ligand>
</feature>
<name>SOK_MARPO</name>
<protein>
    <recommendedName>
        <fullName evidence="5">Protein SOSEKI</fullName>
        <shortName evidence="5">MpSOK</shortName>
    </recommendedName>
</protein>
<evidence type="ECO:0000250" key="1">
    <source>
        <dbReference type="UniProtKB" id="Q9SYJ8"/>
    </source>
</evidence>
<evidence type="ECO:0000255" key="2">
    <source>
        <dbReference type="PROSITE-ProRule" id="PRU01371"/>
    </source>
</evidence>
<evidence type="ECO:0000256" key="3">
    <source>
        <dbReference type="SAM" id="MobiDB-lite"/>
    </source>
</evidence>
<evidence type="ECO:0000269" key="4">
    <source>
    </source>
</evidence>
<evidence type="ECO:0000303" key="5">
    <source>
    </source>
</evidence>
<evidence type="ECO:0000305" key="6"/>
<evidence type="ECO:0000312" key="7">
    <source>
        <dbReference type="EMBL" id="PTQ41796.1"/>
    </source>
</evidence>
<accession>A0A2R6X6S3</accession>
<dbReference type="EMBL" id="KZ772704">
    <property type="protein sequence ID" value="PTQ41796.1"/>
    <property type="molecule type" value="Genomic_DNA"/>
</dbReference>
<dbReference type="SMR" id="A0A2R6X6S3"/>
<dbReference type="EnsemblPlants" id="Mp5g13130.1">
    <property type="protein sequence ID" value="Mp5g13130.1.cds"/>
    <property type="gene ID" value="Mp5g13130"/>
</dbReference>
<dbReference type="Gramene" id="Mp5g13130.1">
    <property type="protein sequence ID" value="Mp5g13130.1.cds"/>
    <property type="gene ID" value="Mp5g13130"/>
</dbReference>
<dbReference type="OMA" id="PRINSIM"/>
<dbReference type="OrthoDB" id="1280899at2759"/>
<dbReference type="Proteomes" id="UP000244005">
    <property type="component" value="Unassembled WGS sequence"/>
</dbReference>
<dbReference type="GO" id="GO:0016324">
    <property type="term" value="C:apical plasma membrane"/>
    <property type="evidence" value="ECO:0000314"/>
    <property type="project" value="UniProtKB"/>
</dbReference>
<dbReference type="GO" id="GO:0042803">
    <property type="term" value="F:protein homodimerization activity"/>
    <property type="evidence" value="ECO:0000250"/>
    <property type="project" value="UniProtKB"/>
</dbReference>
<dbReference type="GO" id="GO:0008270">
    <property type="term" value="F:zinc ion binding"/>
    <property type="evidence" value="ECO:0007669"/>
    <property type="project" value="UniProtKB-KW"/>
</dbReference>
<dbReference type="GO" id="GO:0051301">
    <property type="term" value="P:cell division"/>
    <property type="evidence" value="ECO:0007669"/>
    <property type="project" value="UniProtKB-KW"/>
</dbReference>
<dbReference type="GO" id="GO:1905392">
    <property type="term" value="P:plant organ morphogenesis"/>
    <property type="evidence" value="ECO:0000250"/>
    <property type="project" value="UniProtKB"/>
</dbReference>
<dbReference type="GO" id="GO:0051258">
    <property type="term" value="P:protein polymerization"/>
    <property type="evidence" value="ECO:0000314"/>
    <property type="project" value="UniProtKB"/>
</dbReference>
<dbReference type="GO" id="GO:0051302">
    <property type="term" value="P:regulation of cell division"/>
    <property type="evidence" value="ECO:0000250"/>
    <property type="project" value="UniProtKB"/>
</dbReference>
<dbReference type="GO" id="GO:0090708">
    <property type="term" value="P:specification of plant organ axis polarity"/>
    <property type="evidence" value="ECO:0000250"/>
    <property type="project" value="UniProtKB"/>
</dbReference>
<dbReference type="Gene3D" id="3.30.160.60">
    <property type="entry name" value="Classic Zinc Finger"/>
    <property type="match status" value="1"/>
</dbReference>
<dbReference type="InterPro" id="IPR010369">
    <property type="entry name" value="SOK"/>
</dbReference>
<dbReference type="InterPro" id="IPR048351">
    <property type="entry name" value="SOK_DIX"/>
</dbReference>
<dbReference type="InterPro" id="IPR049899">
    <property type="entry name" value="Znf_C2HC_C3H"/>
</dbReference>
<dbReference type="PANTHER" id="PTHR31083:SF6">
    <property type="entry name" value="PROTEIN SOSEKI 3"/>
    <property type="match status" value="1"/>
</dbReference>
<dbReference type="PANTHER" id="PTHR31083">
    <property type="entry name" value="UPSTREAM OF FLC PROTEIN (DUF966)"/>
    <property type="match status" value="1"/>
</dbReference>
<dbReference type="Pfam" id="PF06136">
    <property type="entry name" value="SOK"/>
    <property type="match status" value="1"/>
</dbReference>
<dbReference type="PROSITE" id="PS52027">
    <property type="entry name" value="ZF_C2HC_C3H"/>
    <property type="match status" value="1"/>
</dbReference>
<proteinExistence type="evidence at protein level"/>
<gene>
    <name evidence="5" type="primary">SOK</name>
    <name evidence="7" type="ORF">MARPO_0032s0007</name>
</gene>